<feature type="initiator methionine" description="Removed; by host" evidence="1">
    <location>
        <position position="1"/>
    </location>
</feature>
<feature type="chain" id="PRO_0000144946" description="Capsid protein">
    <location>
        <begin position="2"/>
        <end position="161"/>
    </location>
</feature>
<accession>Q83486</accession>
<keyword id="KW-0167">Capsid protein</keyword>
<keyword id="KW-1139">Helical capsid protein</keyword>
<keyword id="KW-0946">Virion</keyword>
<dbReference type="EMBL" id="D13438">
    <property type="protein sequence ID" value="BAA02703.1"/>
    <property type="molecule type" value="Genomic_RNA"/>
</dbReference>
<dbReference type="RefSeq" id="NP_620844.1">
    <property type="nucleotide sequence ID" value="NC_003852.1"/>
</dbReference>
<dbReference type="SMR" id="Q83486"/>
<dbReference type="KEGG" id="vg:944440"/>
<dbReference type="OrthoDB" id="12635at10239"/>
<dbReference type="Proteomes" id="UP000008248">
    <property type="component" value="Genome"/>
</dbReference>
<dbReference type="GO" id="GO:0019029">
    <property type="term" value="C:helical viral capsid"/>
    <property type="evidence" value="ECO:0007669"/>
    <property type="project" value="UniProtKB-KW"/>
</dbReference>
<dbReference type="GO" id="GO:0005198">
    <property type="term" value="F:structural molecule activity"/>
    <property type="evidence" value="ECO:0007669"/>
    <property type="project" value="InterPro"/>
</dbReference>
<dbReference type="Gene3D" id="1.20.120.70">
    <property type="entry name" value="Tobacco mosaic virus-like, coat protein"/>
    <property type="match status" value="1"/>
</dbReference>
<dbReference type="InterPro" id="IPR001337">
    <property type="entry name" value="TMV-like_coat"/>
</dbReference>
<dbReference type="InterPro" id="IPR036417">
    <property type="entry name" value="TMV-like_coat_sf"/>
</dbReference>
<dbReference type="Pfam" id="PF00721">
    <property type="entry name" value="TMV_coat"/>
    <property type="match status" value="1"/>
</dbReference>
<dbReference type="SUPFAM" id="SSF47195">
    <property type="entry name" value="TMV-like viral coat proteins"/>
    <property type="match status" value="1"/>
</dbReference>
<comment type="function">
    <text>Capsid protein self-assembles to form rod-shaped virions about 18 nm in diameter with a central canal enclosing the viral genomic RNA.</text>
</comment>
<comment type="subcellular location">
    <subcellularLocation>
        <location evidence="2">Virion</location>
    </subcellularLocation>
</comment>
<comment type="similarity">
    <text evidence="2">Belongs to the virgaviridae capsid protein family.</text>
</comment>
<name>CAPSD_TMOB</name>
<proteinExistence type="inferred from homology"/>
<protein>
    <recommendedName>
        <fullName>Capsid protein</fullName>
    </recommendedName>
    <alternativeName>
        <fullName>Coat protein</fullName>
    </alternativeName>
</protein>
<evidence type="ECO:0000250" key="1"/>
<evidence type="ECO:0000305" key="2"/>
<sequence>MPYTVTSPSQLVYFGSVWADPITFIDLCTVALGNQFQTQNARTTVQQQFSDLFKTVPTRTNRFNDGENGFRVFRYNSTLDPLISALMNSFDTRNRIIEVDNPANPNTSEVASATQRVDDATVNIRACINNLMNELVRGTGMMNTASFETVSNLTWTTTTTT</sequence>
<organism>
    <name type="scientific">Tobamovirus Ob</name>
    <dbReference type="NCBI Taxonomy" id="31749"/>
    <lineage>
        <taxon>Viruses</taxon>
        <taxon>Riboviria</taxon>
        <taxon>Orthornavirae</taxon>
        <taxon>Kitrinoviricota</taxon>
        <taxon>Alsuviricetes</taxon>
        <taxon>Martellivirales</taxon>
        <taxon>Virgaviridae</taxon>
        <taxon>Tobamovirus</taxon>
    </lineage>
</organism>
<organismHost>
    <name type="scientific">Nicotiana tabacum</name>
    <name type="common">Common tobacco</name>
    <dbReference type="NCBI Taxonomy" id="4097"/>
</organismHost>
<reference key="1">
    <citation type="journal article" date="1993" name="J. Gen. Virol.">
        <title>Nucleotide sequence of tobamovirus Ob which can spread systemically in N gene tobacco.</title>
        <authorList>
            <person name="Ikeda R."/>
            <person name="Watanabe E."/>
            <person name="Watanabe Y."/>
            <person name="Okada Y."/>
        </authorList>
    </citation>
    <scope>NUCLEOTIDE SEQUENCE [GENOMIC RNA]</scope>
</reference>
<gene>
    <name type="primary">CP</name>
</gene>